<organism>
    <name type="scientific">Chlorobium luteolum (strain DSM 273 / BCRC 81028 / 2530)</name>
    <name type="common">Pelodictyon luteolum</name>
    <dbReference type="NCBI Taxonomy" id="319225"/>
    <lineage>
        <taxon>Bacteria</taxon>
        <taxon>Pseudomonadati</taxon>
        <taxon>Chlorobiota</taxon>
        <taxon>Chlorobiia</taxon>
        <taxon>Chlorobiales</taxon>
        <taxon>Chlorobiaceae</taxon>
        <taxon>Chlorobium/Pelodictyon group</taxon>
        <taxon>Pelodictyon</taxon>
    </lineage>
</organism>
<dbReference type="EC" id="4.3.3.7" evidence="1"/>
<dbReference type="EMBL" id="CP000096">
    <property type="protein sequence ID" value="ABB24467.1"/>
    <property type="molecule type" value="Genomic_DNA"/>
</dbReference>
<dbReference type="RefSeq" id="WP_011358339.1">
    <property type="nucleotide sequence ID" value="NC_007512.1"/>
</dbReference>
<dbReference type="SMR" id="Q3B2G4"/>
<dbReference type="STRING" id="319225.Plut_1613"/>
<dbReference type="KEGG" id="plt:Plut_1613"/>
<dbReference type="eggNOG" id="COG0329">
    <property type="taxonomic scope" value="Bacteria"/>
</dbReference>
<dbReference type="HOGENOM" id="CLU_049343_7_0_10"/>
<dbReference type="OrthoDB" id="9782828at2"/>
<dbReference type="UniPathway" id="UPA00034">
    <property type="reaction ID" value="UER00017"/>
</dbReference>
<dbReference type="Proteomes" id="UP000002709">
    <property type="component" value="Chromosome"/>
</dbReference>
<dbReference type="GO" id="GO:0005829">
    <property type="term" value="C:cytosol"/>
    <property type="evidence" value="ECO:0007669"/>
    <property type="project" value="TreeGrafter"/>
</dbReference>
<dbReference type="GO" id="GO:0008840">
    <property type="term" value="F:4-hydroxy-tetrahydrodipicolinate synthase activity"/>
    <property type="evidence" value="ECO:0007669"/>
    <property type="project" value="UniProtKB-UniRule"/>
</dbReference>
<dbReference type="GO" id="GO:0019877">
    <property type="term" value="P:diaminopimelate biosynthetic process"/>
    <property type="evidence" value="ECO:0007669"/>
    <property type="project" value="UniProtKB-UniRule"/>
</dbReference>
<dbReference type="GO" id="GO:0009089">
    <property type="term" value="P:lysine biosynthetic process via diaminopimelate"/>
    <property type="evidence" value="ECO:0007669"/>
    <property type="project" value="UniProtKB-UniRule"/>
</dbReference>
<dbReference type="CDD" id="cd00950">
    <property type="entry name" value="DHDPS"/>
    <property type="match status" value="1"/>
</dbReference>
<dbReference type="Gene3D" id="3.20.20.70">
    <property type="entry name" value="Aldolase class I"/>
    <property type="match status" value="1"/>
</dbReference>
<dbReference type="HAMAP" id="MF_00418">
    <property type="entry name" value="DapA"/>
    <property type="match status" value="1"/>
</dbReference>
<dbReference type="InterPro" id="IPR013785">
    <property type="entry name" value="Aldolase_TIM"/>
</dbReference>
<dbReference type="InterPro" id="IPR005263">
    <property type="entry name" value="DapA"/>
</dbReference>
<dbReference type="InterPro" id="IPR002220">
    <property type="entry name" value="DapA-like"/>
</dbReference>
<dbReference type="InterPro" id="IPR020625">
    <property type="entry name" value="Schiff_base-form_aldolases_AS"/>
</dbReference>
<dbReference type="NCBIfam" id="TIGR00674">
    <property type="entry name" value="dapA"/>
    <property type="match status" value="1"/>
</dbReference>
<dbReference type="PANTHER" id="PTHR12128:SF66">
    <property type="entry name" value="4-HYDROXY-2-OXOGLUTARATE ALDOLASE, MITOCHONDRIAL"/>
    <property type="match status" value="1"/>
</dbReference>
<dbReference type="PANTHER" id="PTHR12128">
    <property type="entry name" value="DIHYDRODIPICOLINATE SYNTHASE"/>
    <property type="match status" value="1"/>
</dbReference>
<dbReference type="Pfam" id="PF00701">
    <property type="entry name" value="DHDPS"/>
    <property type="match status" value="1"/>
</dbReference>
<dbReference type="PIRSF" id="PIRSF001365">
    <property type="entry name" value="DHDPS"/>
    <property type="match status" value="1"/>
</dbReference>
<dbReference type="PRINTS" id="PR00146">
    <property type="entry name" value="DHPICSNTHASE"/>
</dbReference>
<dbReference type="SMART" id="SM01130">
    <property type="entry name" value="DHDPS"/>
    <property type="match status" value="1"/>
</dbReference>
<dbReference type="SUPFAM" id="SSF51569">
    <property type="entry name" value="Aldolase"/>
    <property type="match status" value="1"/>
</dbReference>
<dbReference type="PROSITE" id="PS00666">
    <property type="entry name" value="DHDPS_2"/>
    <property type="match status" value="1"/>
</dbReference>
<proteinExistence type="inferred from homology"/>
<gene>
    <name evidence="1" type="primary">dapA</name>
    <name type="ordered locus">Plut_1613</name>
</gene>
<reference key="1">
    <citation type="submission" date="2005-08" db="EMBL/GenBank/DDBJ databases">
        <title>Complete sequence of Pelodictyon luteolum DSM 273.</title>
        <authorList>
            <consortium name="US DOE Joint Genome Institute"/>
            <person name="Copeland A."/>
            <person name="Lucas S."/>
            <person name="Lapidus A."/>
            <person name="Barry K."/>
            <person name="Detter J.C."/>
            <person name="Glavina T."/>
            <person name="Hammon N."/>
            <person name="Israni S."/>
            <person name="Pitluck S."/>
            <person name="Bryant D."/>
            <person name="Schmutz J."/>
            <person name="Larimer F."/>
            <person name="Land M."/>
            <person name="Kyrpides N."/>
            <person name="Ivanova N."/>
            <person name="Richardson P."/>
        </authorList>
    </citation>
    <scope>NUCLEOTIDE SEQUENCE [LARGE SCALE GENOMIC DNA]</scope>
    <source>
        <strain>DSM 273 / BCRC 81028 / 2530</strain>
    </source>
</reference>
<name>DAPA_CHLL3</name>
<sequence>MSTRQLRGSAVALVTPFHKDLTVDVEALIRLVEFHLEAGTDIIIPCGTTGESPTLTEAEQASIIRTVRDASKGRIIVGAGAGTNATVEAVRLAKNAEAAGAEAILSVAPYYNKPSQEGIYQHYRHVAEAVSVPIIIYNVPGRTGCNVDAATVLRLARDFANITAVKEATDNMQQIAELLDGRPEGFSVLTGEDPLILPFMAMGGDGVISVAANQIPGAIKRLVDSVSEGNLEEARKINRKYRRLLRLNFIESNPVPVKYALTRMGMLEETYRLPLVPLSAASKAEMDRELEILGLI</sequence>
<evidence type="ECO:0000255" key="1">
    <source>
        <dbReference type="HAMAP-Rule" id="MF_00418"/>
    </source>
</evidence>
<evidence type="ECO:0000305" key="2"/>
<feature type="chain" id="PRO_1000050237" description="4-hydroxy-tetrahydrodipicolinate synthase">
    <location>
        <begin position="1"/>
        <end position="296"/>
    </location>
</feature>
<feature type="active site" description="Proton donor/acceptor" evidence="1">
    <location>
        <position position="137"/>
    </location>
</feature>
<feature type="active site" description="Schiff-base intermediate with substrate" evidence="1">
    <location>
        <position position="166"/>
    </location>
</feature>
<feature type="binding site" evidence="1">
    <location>
        <position position="49"/>
    </location>
    <ligand>
        <name>pyruvate</name>
        <dbReference type="ChEBI" id="CHEBI:15361"/>
    </ligand>
</feature>
<feature type="binding site" evidence="1">
    <location>
        <position position="208"/>
    </location>
    <ligand>
        <name>pyruvate</name>
        <dbReference type="ChEBI" id="CHEBI:15361"/>
    </ligand>
</feature>
<feature type="site" description="Part of a proton relay during catalysis" evidence="1">
    <location>
        <position position="48"/>
    </location>
</feature>
<feature type="site" description="Part of a proton relay during catalysis" evidence="1">
    <location>
        <position position="111"/>
    </location>
</feature>
<comment type="function">
    <text evidence="1">Catalyzes the condensation of (S)-aspartate-beta-semialdehyde [(S)-ASA] and pyruvate to 4-hydroxy-tetrahydrodipicolinate (HTPA).</text>
</comment>
<comment type="catalytic activity">
    <reaction evidence="1">
        <text>L-aspartate 4-semialdehyde + pyruvate = (2S,4S)-4-hydroxy-2,3,4,5-tetrahydrodipicolinate + H2O + H(+)</text>
        <dbReference type="Rhea" id="RHEA:34171"/>
        <dbReference type="ChEBI" id="CHEBI:15361"/>
        <dbReference type="ChEBI" id="CHEBI:15377"/>
        <dbReference type="ChEBI" id="CHEBI:15378"/>
        <dbReference type="ChEBI" id="CHEBI:67139"/>
        <dbReference type="ChEBI" id="CHEBI:537519"/>
        <dbReference type="EC" id="4.3.3.7"/>
    </reaction>
</comment>
<comment type="pathway">
    <text evidence="1">Amino-acid biosynthesis; L-lysine biosynthesis via DAP pathway; (S)-tetrahydrodipicolinate from L-aspartate: step 3/4.</text>
</comment>
<comment type="subunit">
    <text evidence="1">Homotetramer; dimer of dimers.</text>
</comment>
<comment type="subcellular location">
    <subcellularLocation>
        <location evidence="1">Cytoplasm</location>
    </subcellularLocation>
</comment>
<comment type="similarity">
    <text evidence="1">Belongs to the DapA family.</text>
</comment>
<comment type="caution">
    <text evidence="2">Was originally thought to be a dihydrodipicolinate synthase (DHDPS), catalyzing the condensation of (S)-aspartate-beta-semialdehyde [(S)-ASA] and pyruvate to dihydrodipicolinate (DHDP). However, it was shown in E.coli that the product of the enzymatic reaction is not dihydrodipicolinate but in fact (4S)-4-hydroxy-2,3,4,5-tetrahydro-(2S)-dipicolinic acid (HTPA), and that the consecutive dehydration reaction leading to DHDP is not spontaneous but catalyzed by DapB.</text>
</comment>
<protein>
    <recommendedName>
        <fullName evidence="1">4-hydroxy-tetrahydrodipicolinate synthase</fullName>
        <shortName evidence="1">HTPA synthase</shortName>
        <ecNumber evidence="1">4.3.3.7</ecNumber>
    </recommendedName>
</protein>
<keyword id="KW-0028">Amino-acid biosynthesis</keyword>
<keyword id="KW-0963">Cytoplasm</keyword>
<keyword id="KW-0220">Diaminopimelate biosynthesis</keyword>
<keyword id="KW-0456">Lyase</keyword>
<keyword id="KW-0457">Lysine biosynthesis</keyword>
<keyword id="KW-1185">Reference proteome</keyword>
<keyword id="KW-0704">Schiff base</keyword>
<accession>Q3B2G4</accession>